<sequence>MKKFRWVVLVVVVLACLLLWAQVFNMMCDQDVQFFSGICAINQFIPW</sequence>
<name>MGRB_ECO57</name>
<protein>
    <recommendedName>
        <fullName evidence="1">PhoP/PhoQ regulator MgrB</fullName>
    </recommendedName>
</protein>
<reference key="1">
    <citation type="journal article" date="2001" name="Nature">
        <title>Genome sequence of enterohaemorrhagic Escherichia coli O157:H7.</title>
        <authorList>
            <person name="Perna N.T."/>
            <person name="Plunkett G. III"/>
            <person name="Burland V."/>
            <person name="Mau B."/>
            <person name="Glasner J.D."/>
            <person name="Rose D.J."/>
            <person name="Mayhew G.F."/>
            <person name="Evans P.S."/>
            <person name="Gregor J."/>
            <person name="Kirkpatrick H.A."/>
            <person name="Posfai G."/>
            <person name="Hackett J."/>
            <person name="Klink S."/>
            <person name="Boutin A."/>
            <person name="Shao Y."/>
            <person name="Miller L."/>
            <person name="Grotbeck E.J."/>
            <person name="Davis N.W."/>
            <person name="Lim A."/>
            <person name="Dimalanta E.T."/>
            <person name="Potamousis K."/>
            <person name="Apodaca J."/>
            <person name="Anantharaman T.S."/>
            <person name="Lin J."/>
            <person name="Yen G."/>
            <person name="Schwartz D.C."/>
            <person name="Welch R.A."/>
            <person name="Blattner F.R."/>
        </authorList>
    </citation>
    <scope>NUCLEOTIDE SEQUENCE [LARGE SCALE GENOMIC DNA]</scope>
    <source>
        <strain>O157:H7 / EDL933 / ATCC 700927 / EHEC</strain>
    </source>
</reference>
<reference key="2">
    <citation type="journal article" date="2001" name="DNA Res.">
        <title>Complete genome sequence of enterohemorrhagic Escherichia coli O157:H7 and genomic comparison with a laboratory strain K-12.</title>
        <authorList>
            <person name="Hayashi T."/>
            <person name="Makino K."/>
            <person name="Ohnishi M."/>
            <person name="Kurokawa K."/>
            <person name="Ishii K."/>
            <person name="Yokoyama K."/>
            <person name="Han C.-G."/>
            <person name="Ohtsubo E."/>
            <person name="Nakayama K."/>
            <person name="Murata T."/>
            <person name="Tanaka M."/>
            <person name="Tobe T."/>
            <person name="Iida T."/>
            <person name="Takami H."/>
            <person name="Honda T."/>
            <person name="Sasakawa C."/>
            <person name="Ogasawara N."/>
            <person name="Yasunaga T."/>
            <person name="Kuhara S."/>
            <person name="Shiba T."/>
            <person name="Hattori M."/>
            <person name="Shinagawa H."/>
        </authorList>
    </citation>
    <scope>NUCLEOTIDE SEQUENCE [LARGE SCALE GENOMIC DNA]</scope>
    <source>
        <strain>O157:H7 / Sakai / RIMD 0509952 / EHEC</strain>
    </source>
</reference>
<organism>
    <name type="scientific">Escherichia coli O157:H7</name>
    <dbReference type="NCBI Taxonomy" id="83334"/>
    <lineage>
        <taxon>Bacteria</taxon>
        <taxon>Pseudomonadati</taxon>
        <taxon>Pseudomonadota</taxon>
        <taxon>Gammaproteobacteria</taxon>
        <taxon>Enterobacterales</taxon>
        <taxon>Enterobacteriaceae</taxon>
        <taxon>Escherichia</taxon>
    </lineage>
</organism>
<proteinExistence type="inferred from homology"/>
<feature type="chain" id="PRO_0000169067" description="PhoP/PhoQ regulator MgrB">
    <location>
        <begin position="1"/>
        <end position="47"/>
    </location>
</feature>
<feature type="transmembrane region" description="Helical" evidence="1">
    <location>
        <begin position="6"/>
        <end position="26"/>
    </location>
</feature>
<evidence type="ECO:0000255" key="1">
    <source>
        <dbReference type="HAMAP-Rule" id="MF_01596"/>
    </source>
</evidence>
<gene>
    <name evidence="1" type="primary">mgrB</name>
    <name type="ordered locus">Z2872</name>
    <name type="ordered locus">ECs2536</name>
</gene>
<keyword id="KW-0997">Cell inner membrane</keyword>
<keyword id="KW-1003">Cell membrane</keyword>
<keyword id="KW-0472">Membrane</keyword>
<keyword id="KW-1185">Reference proteome</keyword>
<keyword id="KW-0812">Transmembrane</keyword>
<keyword id="KW-1133">Transmembrane helix</keyword>
<comment type="function">
    <text evidence="1">PhoP-regulated transcription is redox-sensitive, being activated when the periplasm becomes more reducing. MgrB acts between DsbA/DsbB and PhoP/PhoQ in this pathway. Represses PhoP/PhoQ signaling, possibly by binding to the periplasmic domain of PhoQ, altering its activity and that of downstream effector PhoP.</text>
</comment>
<comment type="subunit">
    <text evidence="1">May form homooligomers. Probably interacts with the periplasmic domain of PhoQ.</text>
</comment>
<comment type="subcellular location">
    <subcellularLocation>
        <location evidence="1">Cell inner membrane</location>
        <topology evidence="1">Single-pass membrane protein</topology>
    </subcellularLocation>
</comment>
<comment type="similarity">
    <text evidence="1">Belongs to the MgrB family.</text>
</comment>
<dbReference type="EMBL" id="AE005174">
    <property type="protein sequence ID" value="AAG56815.1"/>
    <property type="molecule type" value="Genomic_DNA"/>
</dbReference>
<dbReference type="EMBL" id="BA000007">
    <property type="protein sequence ID" value="BAB35959.1"/>
    <property type="molecule type" value="Genomic_DNA"/>
</dbReference>
<dbReference type="PIR" id="C85794">
    <property type="entry name" value="C85794"/>
</dbReference>
<dbReference type="PIR" id="H90945">
    <property type="entry name" value="H90945"/>
</dbReference>
<dbReference type="RefSeq" id="NP_310563.1">
    <property type="nucleotide sequence ID" value="NC_002695.1"/>
</dbReference>
<dbReference type="RefSeq" id="WP_000714550.1">
    <property type="nucleotide sequence ID" value="NZ_VOAI01000010.1"/>
</dbReference>
<dbReference type="SMR" id="P64513"/>
<dbReference type="STRING" id="155864.Z2872"/>
<dbReference type="GeneID" id="93776075"/>
<dbReference type="KEGG" id="ece:Z2872"/>
<dbReference type="PATRIC" id="fig|386585.9.peg.2658"/>
<dbReference type="eggNOG" id="ENOG50333DF">
    <property type="taxonomic scope" value="Bacteria"/>
</dbReference>
<dbReference type="HOGENOM" id="CLU_208030_1_0_6"/>
<dbReference type="Proteomes" id="UP000000558">
    <property type="component" value="Chromosome"/>
</dbReference>
<dbReference type="Proteomes" id="UP000002519">
    <property type="component" value="Chromosome"/>
</dbReference>
<dbReference type="GO" id="GO:0005886">
    <property type="term" value="C:plasma membrane"/>
    <property type="evidence" value="ECO:0007669"/>
    <property type="project" value="UniProtKB-SubCell"/>
</dbReference>
<dbReference type="GO" id="GO:0070298">
    <property type="term" value="P:negative regulation of phosphorelay signal transduction system"/>
    <property type="evidence" value="ECO:0007669"/>
    <property type="project" value="UniProtKB-UniRule"/>
</dbReference>
<dbReference type="HAMAP" id="MF_01596">
    <property type="entry name" value="MgrB"/>
    <property type="match status" value="1"/>
</dbReference>
<dbReference type="InterPro" id="IPR020907">
    <property type="entry name" value="MgrB"/>
</dbReference>
<dbReference type="NCBIfam" id="NF007635">
    <property type="entry name" value="PRK10299.1"/>
    <property type="match status" value="1"/>
</dbReference>
<dbReference type="Pfam" id="PF13998">
    <property type="entry name" value="MgrB"/>
    <property type="match status" value="1"/>
</dbReference>
<dbReference type="PROSITE" id="PS51257">
    <property type="entry name" value="PROKAR_LIPOPROTEIN"/>
    <property type="match status" value="1"/>
</dbReference>
<accession>P64513</accession>
<accession>P76267</accession>